<name>RL16_AZOVD</name>
<accession>C1DKM0</accession>
<keyword id="KW-0687">Ribonucleoprotein</keyword>
<keyword id="KW-0689">Ribosomal protein</keyword>
<keyword id="KW-0694">RNA-binding</keyword>
<keyword id="KW-0699">rRNA-binding</keyword>
<keyword id="KW-0820">tRNA-binding</keyword>
<evidence type="ECO:0000255" key="1">
    <source>
        <dbReference type="HAMAP-Rule" id="MF_01342"/>
    </source>
</evidence>
<evidence type="ECO:0000305" key="2"/>
<feature type="chain" id="PRO_1000214721" description="Large ribosomal subunit protein uL16">
    <location>
        <begin position="1"/>
        <end position="137"/>
    </location>
</feature>
<proteinExistence type="inferred from homology"/>
<organism>
    <name type="scientific">Azotobacter vinelandii (strain DJ / ATCC BAA-1303)</name>
    <dbReference type="NCBI Taxonomy" id="322710"/>
    <lineage>
        <taxon>Bacteria</taxon>
        <taxon>Pseudomonadati</taxon>
        <taxon>Pseudomonadota</taxon>
        <taxon>Gammaproteobacteria</taxon>
        <taxon>Pseudomonadales</taxon>
        <taxon>Pseudomonadaceae</taxon>
        <taxon>Azotobacter</taxon>
    </lineage>
</organism>
<sequence>MLQPKRTKFRKQMTGHNRGLAHRGSKVSFGEFALKSVSRGRLTARQIEAARRALTRHVKRGGKIWIRVFPDKPVTKKPLEVRMGKGKGNVEYWVAQIQPGKVLYEIEGVSEELAREAFALAAAKLPLATTFVKRTVM</sequence>
<reference key="1">
    <citation type="journal article" date="2009" name="J. Bacteriol.">
        <title>Genome sequence of Azotobacter vinelandii, an obligate aerobe specialized to support diverse anaerobic metabolic processes.</title>
        <authorList>
            <person name="Setubal J.C."/>
            <person name="Dos Santos P."/>
            <person name="Goldman B.S."/>
            <person name="Ertesvaag H."/>
            <person name="Espin G."/>
            <person name="Rubio L.M."/>
            <person name="Valla S."/>
            <person name="Almeida N.F."/>
            <person name="Balasubramanian D."/>
            <person name="Cromes L."/>
            <person name="Curatti L."/>
            <person name="Du Z."/>
            <person name="Godsy E."/>
            <person name="Goodner B."/>
            <person name="Hellner-Burris K."/>
            <person name="Hernandez J.A."/>
            <person name="Houmiel K."/>
            <person name="Imperial J."/>
            <person name="Kennedy C."/>
            <person name="Larson T.J."/>
            <person name="Latreille P."/>
            <person name="Ligon L.S."/>
            <person name="Lu J."/>
            <person name="Maerk M."/>
            <person name="Miller N.M."/>
            <person name="Norton S."/>
            <person name="O'Carroll I.P."/>
            <person name="Paulsen I."/>
            <person name="Raulfs E.C."/>
            <person name="Roemer R."/>
            <person name="Rosser J."/>
            <person name="Segura D."/>
            <person name="Slater S."/>
            <person name="Stricklin S.L."/>
            <person name="Studholme D.J."/>
            <person name="Sun J."/>
            <person name="Viana C.J."/>
            <person name="Wallin E."/>
            <person name="Wang B."/>
            <person name="Wheeler C."/>
            <person name="Zhu H."/>
            <person name="Dean D.R."/>
            <person name="Dixon R."/>
            <person name="Wood D."/>
        </authorList>
    </citation>
    <scope>NUCLEOTIDE SEQUENCE [LARGE SCALE GENOMIC DNA]</scope>
    <source>
        <strain>DJ / ATCC BAA-1303</strain>
    </source>
</reference>
<comment type="function">
    <text evidence="1">Binds 23S rRNA and is also seen to make contacts with the A and possibly P site tRNAs.</text>
</comment>
<comment type="subunit">
    <text evidence="1">Part of the 50S ribosomal subunit.</text>
</comment>
<comment type="similarity">
    <text evidence="1">Belongs to the universal ribosomal protein uL16 family.</text>
</comment>
<protein>
    <recommendedName>
        <fullName evidence="1">Large ribosomal subunit protein uL16</fullName>
    </recommendedName>
    <alternativeName>
        <fullName evidence="2">50S ribosomal protein L16</fullName>
    </alternativeName>
</protein>
<gene>
    <name evidence="1" type="primary">rplP</name>
    <name type="ordered locus">Avin_06320</name>
</gene>
<dbReference type="EMBL" id="CP001157">
    <property type="protein sequence ID" value="ACO76883.1"/>
    <property type="molecule type" value="Genomic_DNA"/>
</dbReference>
<dbReference type="RefSeq" id="WP_012699309.1">
    <property type="nucleotide sequence ID" value="NZ_CP144736.1"/>
</dbReference>
<dbReference type="SMR" id="C1DKM0"/>
<dbReference type="STRING" id="322710.Avin_06320"/>
<dbReference type="EnsemblBacteria" id="ACO76883">
    <property type="protein sequence ID" value="ACO76883"/>
    <property type="gene ID" value="Avin_06320"/>
</dbReference>
<dbReference type="GeneID" id="88184043"/>
<dbReference type="KEGG" id="avn:Avin_06320"/>
<dbReference type="eggNOG" id="COG0197">
    <property type="taxonomic scope" value="Bacteria"/>
</dbReference>
<dbReference type="HOGENOM" id="CLU_078858_2_1_6"/>
<dbReference type="OrthoDB" id="9802589at2"/>
<dbReference type="Proteomes" id="UP000002424">
    <property type="component" value="Chromosome"/>
</dbReference>
<dbReference type="GO" id="GO:0022625">
    <property type="term" value="C:cytosolic large ribosomal subunit"/>
    <property type="evidence" value="ECO:0007669"/>
    <property type="project" value="TreeGrafter"/>
</dbReference>
<dbReference type="GO" id="GO:0019843">
    <property type="term" value="F:rRNA binding"/>
    <property type="evidence" value="ECO:0007669"/>
    <property type="project" value="UniProtKB-UniRule"/>
</dbReference>
<dbReference type="GO" id="GO:0003735">
    <property type="term" value="F:structural constituent of ribosome"/>
    <property type="evidence" value="ECO:0007669"/>
    <property type="project" value="InterPro"/>
</dbReference>
<dbReference type="GO" id="GO:0000049">
    <property type="term" value="F:tRNA binding"/>
    <property type="evidence" value="ECO:0007669"/>
    <property type="project" value="UniProtKB-KW"/>
</dbReference>
<dbReference type="GO" id="GO:0006412">
    <property type="term" value="P:translation"/>
    <property type="evidence" value="ECO:0007669"/>
    <property type="project" value="UniProtKB-UniRule"/>
</dbReference>
<dbReference type="CDD" id="cd01433">
    <property type="entry name" value="Ribosomal_L16_L10e"/>
    <property type="match status" value="1"/>
</dbReference>
<dbReference type="FunFam" id="3.90.1170.10:FF:000001">
    <property type="entry name" value="50S ribosomal protein L16"/>
    <property type="match status" value="1"/>
</dbReference>
<dbReference type="Gene3D" id="3.90.1170.10">
    <property type="entry name" value="Ribosomal protein L10e/L16"/>
    <property type="match status" value="1"/>
</dbReference>
<dbReference type="HAMAP" id="MF_01342">
    <property type="entry name" value="Ribosomal_uL16"/>
    <property type="match status" value="1"/>
</dbReference>
<dbReference type="InterPro" id="IPR047873">
    <property type="entry name" value="Ribosomal_uL16"/>
</dbReference>
<dbReference type="InterPro" id="IPR000114">
    <property type="entry name" value="Ribosomal_uL16_bact-type"/>
</dbReference>
<dbReference type="InterPro" id="IPR020798">
    <property type="entry name" value="Ribosomal_uL16_CS"/>
</dbReference>
<dbReference type="InterPro" id="IPR016180">
    <property type="entry name" value="Ribosomal_uL16_dom"/>
</dbReference>
<dbReference type="InterPro" id="IPR036920">
    <property type="entry name" value="Ribosomal_uL16_sf"/>
</dbReference>
<dbReference type="NCBIfam" id="TIGR01164">
    <property type="entry name" value="rplP_bact"/>
    <property type="match status" value="1"/>
</dbReference>
<dbReference type="PANTHER" id="PTHR12220">
    <property type="entry name" value="50S/60S RIBOSOMAL PROTEIN L16"/>
    <property type="match status" value="1"/>
</dbReference>
<dbReference type="PANTHER" id="PTHR12220:SF13">
    <property type="entry name" value="LARGE RIBOSOMAL SUBUNIT PROTEIN UL16M"/>
    <property type="match status" value="1"/>
</dbReference>
<dbReference type="Pfam" id="PF00252">
    <property type="entry name" value="Ribosomal_L16"/>
    <property type="match status" value="1"/>
</dbReference>
<dbReference type="PRINTS" id="PR00060">
    <property type="entry name" value="RIBOSOMALL16"/>
</dbReference>
<dbReference type="SUPFAM" id="SSF54686">
    <property type="entry name" value="Ribosomal protein L16p/L10e"/>
    <property type="match status" value="1"/>
</dbReference>
<dbReference type="PROSITE" id="PS00586">
    <property type="entry name" value="RIBOSOMAL_L16_1"/>
    <property type="match status" value="1"/>
</dbReference>
<dbReference type="PROSITE" id="PS00701">
    <property type="entry name" value="RIBOSOMAL_L16_2"/>
    <property type="match status" value="1"/>
</dbReference>